<dbReference type="EC" id="4.2.1.9" evidence="1"/>
<dbReference type="EMBL" id="CP000578">
    <property type="protein sequence ID" value="ABN78881.1"/>
    <property type="molecule type" value="Genomic_DNA"/>
</dbReference>
<dbReference type="RefSeq" id="WP_011339020.1">
    <property type="nucleotide sequence ID" value="NC_009050.1"/>
</dbReference>
<dbReference type="SMR" id="A3PRB5"/>
<dbReference type="GeneID" id="3721350"/>
<dbReference type="KEGG" id="rsh:Rsph17029_3801"/>
<dbReference type="HOGENOM" id="CLU_014271_4_2_5"/>
<dbReference type="UniPathway" id="UPA00047">
    <property type="reaction ID" value="UER00057"/>
</dbReference>
<dbReference type="UniPathway" id="UPA00049">
    <property type="reaction ID" value="UER00061"/>
</dbReference>
<dbReference type="GO" id="GO:0005829">
    <property type="term" value="C:cytosol"/>
    <property type="evidence" value="ECO:0007669"/>
    <property type="project" value="TreeGrafter"/>
</dbReference>
<dbReference type="GO" id="GO:0051537">
    <property type="term" value="F:2 iron, 2 sulfur cluster binding"/>
    <property type="evidence" value="ECO:0007669"/>
    <property type="project" value="UniProtKB-UniRule"/>
</dbReference>
<dbReference type="GO" id="GO:0004160">
    <property type="term" value="F:dihydroxy-acid dehydratase activity"/>
    <property type="evidence" value="ECO:0007669"/>
    <property type="project" value="UniProtKB-UniRule"/>
</dbReference>
<dbReference type="GO" id="GO:0000287">
    <property type="term" value="F:magnesium ion binding"/>
    <property type="evidence" value="ECO:0007669"/>
    <property type="project" value="UniProtKB-UniRule"/>
</dbReference>
<dbReference type="GO" id="GO:0009097">
    <property type="term" value="P:isoleucine biosynthetic process"/>
    <property type="evidence" value="ECO:0007669"/>
    <property type="project" value="UniProtKB-UniRule"/>
</dbReference>
<dbReference type="GO" id="GO:0009099">
    <property type="term" value="P:L-valine biosynthetic process"/>
    <property type="evidence" value="ECO:0007669"/>
    <property type="project" value="UniProtKB-UniRule"/>
</dbReference>
<dbReference type="FunFam" id="3.50.30.80:FF:000001">
    <property type="entry name" value="Dihydroxy-acid dehydratase"/>
    <property type="match status" value="1"/>
</dbReference>
<dbReference type="Gene3D" id="3.50.30.80">
    <property type="entry name" value="IlvD/EDD C-terminal domain-like"/>
    <property type="match status" value="1"/>
</dbReference>
<dbReference type="HAMAP" id="MF_00012">
    <property type="entry name" value="IlvD"/>
    <property type="match status" value="1"/>
</dbReference>
<dbReference type="InterPro" id="IPR042096">
    <property type="entry name" value="Dihydro-acid_dehy_C"/>
</dbReference>
<dbReference type="InterPro" id="IPR004404">
    <property type="entry name" value="DihydroxyA_deHydtase"/>
</dbReference>
<dbReference type="InterPro" id="IPR020558">
    <property type="entry name" value="DiOHA_6PGluconate_deHydtase_CS"/>
</dbReference>
<dbReference type="InterPro" id="IPR056740">
    <property type="entry name" value="ILV_EDD_C"/>
</dbReference>
<dbReference type="InterPro" id="IPR000581">
    <property type="entry name" value="ILV_EDD_N"/>
</dbReference>
<dbReference type="InterPro" id="IPR037237">
    <property type="entry name" value="IlvD/EDD_N"/>
</dbReference>
<dbReference type="NCBIfam" id="TIGR00110">
    <property type="entry name" value="ilvD"/>
    <property type="match status" value="1"/>
</dbReference>
<dbReference type="NCBIfam" id="NF009103">
    <property type="entry name" value="PRK12448.1"/>
    <property type="match status" value="1"/>
</dbReference>
<dbReference type="PANTHER" id="PTHR43661">
    <property type="entry name" value="D-XYLONATE DEHYDRATASE"/>
    <property type="match status" value="1"/>
</dbReference>
<dbReference type="PANTHER" id="PTHR43661:SF3">
    <property type="entry name" value="D-XYLONATE DEHYDRATASE YAGF-RELATED"/>
    <property type="match status" value="1"/>
</dbReference>
<dbReference type="Pfam" id="PF24877">
    <property type="entry name" value="ILV_EDD_C"/>
    <property type="match status" value="1"/>
</dbReference>
<dbReference type="Pfam" id="PF00920">
    <property type="entry name" value="ILVD_EDD_N"/>
    <property type="match status" value="1"/>
</dbReference>
<dbReference type="SUPFAM" id="SSF143975">
    <property type="entry name" value="IlvD/EDD N-terminal domain-like"/>
    <property type="match status" value="1"/>
</dbReference>
<dbReference type="SUPFAM" id="SSF52016">
    <property type="entry name" value="LeuD/IlvD-like"/>
    <property type="match status" value="1"/>
</dbReference>
<dbReference type="PROSITE" id="PS00886">
    <property type="entry name" value="ILVD_EDD_1"/>
    <property type="match status" value="1"/>
</dbReference>
<dbReference type="PROSITE" id="PS00887">
    <property type="entry name" value="ILVD_EDD_2"/>
    <property type="match status" value="1"/>
</dbReference>
<accession>A3PRB5</accession>
<comment type="function">
    <text evidence="1">Functions in the biosynthesis of branched-chain amino acids. Catalyzes the dehydration of (2R,3R)-2,3-dihydroxy-3-methylpentanoate (2,3-dihydroxy-3-methylvalerate) into 2-oxo-3-methylpentanoate (2-oxo-3-methylvalerate) and of (2R)-2,3-dihydroxy-3-methylbutanoate (2,3-dihydroxyisovalerate) into 2-oxo-3-methylbutanoate (2-oxoisovalerate), the penultimate precursor to L-isoleucine and L-valine, respectively.</text>
</comment>
<comment type="catalytic activity">
    <reaction evidence="1">
        <text>(2R)-2,3-dihydroxy-3-methylbutanoate = 3-methyl-2-oxobutanoate + H2O</text>
        <dbReference type="Rhea" id="RHEA:24809"/>
        <dbReference type="ChEBI" id="CHEBI:11851"/>
        <dbReference type="ChEBI" id="CHEBI:15377"/>
        <dbReference type="ChEBI" id="CHEBI:49072"/>
        <dbReference type="EC" id="4.2.1.9"/>
    </reaction>
    <physiologicalReaction direction="left-to-right" evidence="1">
        <dbReference type="Rhea" id="RHEA:24810"/>
    </physiologicalReaction>
</comment>
<comment type="catalytic activity">
    <reaction evidence="1">
        <text>(2R,3R)-2,3-dihydroxy-3-methylpentanoate = (S)-3-methyl-2-oxopentanoate + H2O</text>
        <dbReference type="Rhea" id="RHEA:27694"/>
        <dbReference type="ChEBI" id="CHEBI:15377"/>
        <dbReference type="ChEBI" id="CHEBI:35146"/>
        <dbReference type="ChEBI" id="CHEBI:49258"/>
        <dbReference type="EC" id="4.2.1.9"/>
    </reaction>
    <physiologicalReaction direction="left-to-right" evidence="1">
        <dbReference type="Rhea" id="RHEA:27695"/>
    </physiologicalReaction>
</comment>
<comment type="cofactor">
    <cofactor evidence="1">
        <name>[2Fe-2S] cluster</name>
        <dbReference type="ChEBI" id="CHEBI:190135"/>
    </cofactor>
    <text evidence="1">Binds 1 [2Fe-2S] cluster per subunit. This cluster acts as a Lewis acid cofactor.</text>
</comment>
<comment type="cofactor">
    <cofactor evidence="1">
        <name>Mg(2+)</name>
        <dbReference type="ChEBI" id="CHEBI:18420"/>
    </cofactor>
</comment>
<comment type="pathway">
    <text evidence="1">Amino-acid biosynthesis; L-isoleucine biosynthesis; L-isoleucine from 2-oxobutanoate: step 3/4.</text>
</comment>
<comment type="pathway">
    <text evidence="1">Amino-acid biosynthesis; L-valine biosynthesis; L-valine from pyruvate: step 3/4.</text>
</comment>
<comment type="subunit">
    <text evidence="1">Homodimer.</text>
</comment>
<comment type="similarity">
    <text evidence="1">Belongs to the IlvD/Edd family.</text>
</comment>
<reference key="1">
    <citation type="submission" date="2007-02" db="EMBL/GenBank/DDBJ databases">
        <title>Complete sequence of chromosome 2 of Rhodobacter sphaeroides ATCC 17029.</title>
        <authorList>
            <person name="Copeland A."/>
            <person name="Lucas S."/>
            <person name="Lapidus A."/>
            <person name="Barry K."/>
            <person name="Detter J.C."/>
            <person name="Glavina del Rio T."/>
            <person name="Hammon N."/>
            <person name="Israni S."/>
            <person name="Dalin E."/>
            <person name="Tice H."/>
            <person name="Pitluck S."/>
            <person name="Kiss H."/>
            <person name="Brettin T."/>
            <person name="Bruce D."/>
            <person name="Han C."/>
            <person name="Tapia R."/>
            <person name="Gilna P."/>
            <person name="Schmutz J."/>
            <person name="Larimer F."/>
            <person name="Land M."/>
            <person name="Hauser L."/>
            <person name="Kyrpides N."/>
            <person name="Mikhailova N."/>
            <person name="Richardson P."/>
            <person name="Mackenzie C."/>
            <person name="Choudhary M."/>
            <person name="Donohue T.J."/>
            <person name="Kaplan S."/>
        </authorList>
    </citation>
    <scope>NUCLEOTIDE SEQUENCE [LARGE SCALE GENOMIC DNA]</scope>
    <source>
        <strain>ATCC 17029 / ATH 2.4.9</strain>
    </source>
</reference>
<proteinExistence type="inferred from homology"/>
<feature type="chain" id="PRO_1000001047" description="Dihydroxy-acid dehydratase">
    <location>
        <begin position="1"/>
        <end position="612"/>
    </location>
</feature>
<feature type="active site" description="Proton acceptor" evidence="1">
    <location>
        <position position="518"/>
    </location>
</feature>
<feature type="binding site" evidence="1">
    <location>
        <position position="81"/>
    </location>
    <ligand>
        <name>Mg(2+)</name>
        <dbReference type="ChEBI" id="CHEBI:18420"/>
    </ligand>
</feature>
<feature type="binding site" evidence="1">
    <location>
        <position position="122"/>
    </location>
    <ligand>
        <name>[2Fe-2S] cluster</name>
        <dbReference type="ChEBI" id="CHEBI:190135"/>
    </ligand>
</feature>
<feature type="binding site" evidence="1">
    <location>
        <position position="123"/>
    </location>
    <ligand>
        <name>Mg(2+)</name>
        <dbReference type="ChEBI" id="CHEBI:18420"/>
    </ligand>
</feature>
<feature type="binding site" description="via carbamate group" evidence="1">
    <location>
        <position position="124"/>
    </location>
    <ligand>
        <name>Mg(2+)</name>
        <dbReference type="ChEBI" id="CHEBI:18420"/>
    </ligand>
</feature>
<feature type="binding site" evidence="1">
    <location>
        <position position="196"/>
    </location>
    <ligand>
        <name>[2Fe-2S] cluster</name>
        <dbReference type="ChEBI" id="CHEBI:190135"/>
    </ligand>
</feature>
<feature type="binding site" evidence="1">
    <location>
        <position position="492"/>
    </location>
    <ligand>
        <name>Mg(2+)</name>
        <dbReference type="ChEBI" id="CHEBI:18420"/>
    </ligand>
</feature>
<feature type="modified residue" description="N6-carboxylysine" evidence="1">
    <location>
        <position position="124"/>
    </location>
</feature>
<sequence>MPAFRSRTSTHGRNMAGARGLWRATGVKDSDFGKPIIAIVNSFTQFVPGHVHLKDLGQLVAREVEAAGGIAKEFNTIAVDDGIAMGHDGMLYSLPSRELIADSVEYMVNAHCADAMVCISNCDKITPGMLMAAMRLNIPAVFVSGGPMEAGKVTLGDGRTVKMDLIDAMVAAADEKVSDDDLTRIEQAACPTCGSCSGMFTANSMNCLTEALGLSLPGNGSTLATHAYRKELFLEAGRRAVELCRRYYEQEDEGVLPRAIATKEAFENAMALDIAMGGSTNTVLHILAAAQEGGVDFTMDDIDALSRRVPCLCKVAPNKADVHIEDVHRAGGIMSILGELDRGGLLHRDTRTVHAPTLGAAIDQWDIGRSNAPEARELFLAAPGGVPTQVAFSQSSTWDTLDTDRETGVIRSVATPFSKDGGLAVLKGNLAPDGCIVKTAGVDESILVFAGPAKVFESQDAAVYGILNGGVQAGDVVVIRYEGPKGGPGMQEMLYPTSYLKSKGLGKACALITDGRFSGGTSGLSIGHASPEAASGGPIGLVREGDRIEIDIPNRTITLAVPEAELAARRAEQDAKGWKPAGPRKRKVSQALKVYAQFASSADKGAVRVLPE</sequence>
<keyword id="KW-0001">2Fe-2S</keyword>
<keyword id="KW-0028">Amino-acid biosynthesis</keyword>
<keyword id="KW-0100">Branched-chain amino acid biosynthesis</keyword>
<keyword id="KW-0408">Iron</keyword>
<keyword id="KW-0411">Iron-sulfur</keyword>
<keyword id="KW-0456">Lyase</keyword>
<keyword id="KW-0460">Magnesium</keyword>
<keyword id="KW-0479">Metal-binding</keyword>
<gene>
    <name evidence="1" type="primary">ilvD</name>
    <name type="ordered locus">Rsph17029_3801</name>
</gene>
<name>ILVD_CERS1</name>
<organism>
    <name type="scientific">Cereibacter sphaeroides (strain ATCC 17029 / ATH 2.4.9)</name>
    <name type="common">Rhodobacter sphaeroides</name>
    <dbReference type="NCBI Taxonomy" id="349101"/>
    <lineage>
        <taxon>Bacteria</taxon>
        <taxon>Pseudomonadati</taxon>
        <taxon>Pseudomonadota</taxon>
        <taxon>Alphaproteobacteria</taxon>
        <taxon>Rhodobacterales</taxon>
        <taxon>Paracoccaceae</taxon>
        <taxon>Cereibacter</taxon>
    </lineage>
</organism>
<evidence type="ECO:0000255" key="1">
    <source>
        <dbReference type="HAMAP-Rule" id="MF_00012"/>
    </source>
</evidence>
<protein>
    <recommendedName>
        <fullName evidence="1">Dihydroxy-acid dehydratase</fullName>
        <shortName evidence="1">DAD</shortName>
        <ecNumber evidence="1">4.2.1.9</ecNumber>
    </recommendedName>
</protein>